<proteinExistence type="inferred from homology"/>
<accession>A3PYU9</accession>
<sequence>MSGHSKWATTKHKKAIIDARRGKNFAKLIKNIEVAARTGGGDPGGNPTLYDAIQKAKKSSVPNDNIERARKRGAGEEAGGADWQTITYEGYGPNGVAVLIECLTDNRNRAAGEVRVAMTRNGGNMADPGSVSYLFSRKGVITLEKNGLSEDDVLMAVLEAGAEEVTDLGDSFEIISEPTDLVAVRTALQDAGIDYDSADASFQPSVTVPLDAEGARKVMKLVDALEDSDDVQDVYTNADIPDEILAQLEE</sequence>
<dbReference type="EMBL" id="CP000580">
    <property type="protein sequence ID" value="ABN98076.1"/>
    <property type="molecule type" value="Genomic_DNA"/>
</dbReference>
<dbReference type="SMR" id="A3PYU9"/>
<dbReference type="KEGG" id="mjl:Mjls_2290"/>
<dbReference type="HOGENOM" id="CLU_062974_2_2_11"/>
<dbReference type="BioCyc" id="MSP164757:G1G8C-2309-MONOMER"/>
<dbReference type="GO" id="GO:0005829">
    <property type="term" value="C:cytosol"/>
    <property type="evidence" value="ECO:0007669"/>
    <property type="project" value="TreeGrafter"/>
</dbReference>
<dbReference type="GO" id="GO:0003677">
    <property type="term" value="F:DNA binding"/>
    <property type="evidence" value="ECO:0007669"/>
    <property type="project" value="UniProtKB-UniRule"/>
</dbReference>
<dbReference type="GO" id="GO:0006355">
    <property type="term" value="P:regulation of DNA-templated transcription"/>
    <property type="evidence" value="ECO:0007669"/>
    <property type="project" value="UniProtKB-UniRule"/>
</dbReference>
<dbReference type="FunFam" id="1.10.10.200:FF:000002">
    <property type="entry name" value="Probable transcriptional regulatory protein CLM62_37755"/>
    <property type="match status" value="1"/>
</dbReference>
<dbReference type="FunFam" id="3.30.70.980:FF:000006">
    <property type="entry name" value="Probable transcriptional regulatory protein J113_18170"/>
    <property type="match status" value="1"/>
</dbReference>
<dbReference type="Gene3D" id="1.10.10.200">
    <property type="match status" value="1"/>
</dbReference>
<dbReference type="Gene3D" id="3.30.70.980">
    <property type="match status" value="2"/>
</dbReference>
<dbReference type="HAMAP" id="MF_00693">
    <property type="entry name" value="Transcrip_reg_TACO1"/>
    <property type="match status" value="1"/>
</dbReference>
<dbReference type="InterPro" id="IPR017856">
    <property type="entry name" value="Integrase-like_N"/>
</dbReference>
<dbReference type="InterPro" id="IPR048300">
    <property type="entry name" value="TACO1_YebC-like_2nd/3rd_dom"/>
</dbReference>
<dbReference type="InterPro" id="IPR049083">
    <property type="entry name" value="TACO1_YebC_N"/>
</dbReference>
<dbReference type="InterPro" id="IPR002876">
    <property type="entry name" value="Transcrip_reg_TACO1-like"/>
</dbReference>
<dbReference type="InterPro" id="IPR026564">
    <property type="entry name" value="Transcrip_reg_TACO1-like_dom3"/>
</dbReference>
<dbReference type="InterPro" id="IPR029072">
    <property type="entry name" value="YebC-like"/>
</dbReference>
<dbReference type="NCBIfam" id="NF001030">
    <property type="entry name" value="PRK00110.1"/>
    <property type="match status" value="1"/>
</dbReference>
<dbReference type="NCBIfam" id="NF009044">
    <property type="entry name" value="PRK12378.1"/>
    <property type="match status" value="1"/>
</dbReference>
<dbReference type="NCBIfam" id="TIGR01033">
    <property type="entry name" value="YebC/PmpR family DNA-binding transcriptional regulator"/>
    <property type="match status" value="1"/>
</dbReference>
<dbReference type="PANTHER" id="PTHR12532:SF6">
    <property type="entry name" value="TRANSCRIPTIONAL REGULATORY PROTEIN YEBC-RELATED"/>
    <property type="match status" value="1"/>
</dbReference>
<dbReference type="PANTHER" id="PTHR12532">
    <property type="entry name" value="TRANSLATIONAL ACTIVATOR OF CYTOCHROME C OXIDASE 1"/>
    <property type="match status" value="1"/>
</dbReference>
<dbReference type="Pfam" id="PF20772">
    <property type="entry name" value="TACO1_YebC_N"/>
    <property type="match status" value="1"/>
</dbReference>
<dbReference type="Pfam" id="PF01709">
    <property type="entry name" value="Transcrip_reg"/>
    <property type="match status" value="1"/>
</dbReference>
<dbReference type="SUPFAM" id="SSF75625">
    <property type="entry name" value="YebC-like"/>
    <property type="match status" value="1"/>
</dbReference>
<name>Y2290_MYCSJ</name>
<keyword id="KW-0963">Cytoplasm</keyword>
<keyword id="KW-0238">DNA-binding</keyword>
<keyword id="KW-0804">Transcription</keyword>
<keyword id="KW-0805">Transcription regulation</keyword>
<protein>
    <recommendedName>
        <fullName evidence="1">Probable transcriptional regulatory protein Mjls_2290</fullName>
    </recommendedName>
</protein>
<reference key="1">
    <citation type="submission" date="2007-02" db="EMBL/GenBank/DDBJ databases">
        <title>Complete sequence of Mycobacterium sp. JLS.</title>
        <authorList>
            <consortium name="US DOE Joint Genome Institute"/>
            <person name="Copeland A."/>
            <person name="Lucas S."/>
            <person name="Lapidus A."/>
            <person name="Barry K."/>
            <person name="Detter J.C."/>
            <person name="Glavina del Rio T."/>
            <person name="Hammon N."/>
            <person name="Israni S."/>
            <person name="Dalin E."/>
            <person name="Tice H."/>
            <person name="Pitluck S."/>
            <person name="Chain P."/>
            <person name="Malfatti S."/>
            <person name="Shin M."/>
            <person name="Vergez L."/>
            <person name="Schmutz J."/>
            <person name="Larimer F."/>
            <person name="Land M."/>
            <person name="Hauser L."/>
            <person name="Kyrpides N."/>
            <person name="Mikhailova N."/>
            <person name="Miller C.D."/>
            <person name="Anderson A.J."/>
            <person name="Sims R.C."/>
            <person name="Richardson P."/>
        </authorList>
    </citation>
    <scope>NUCLEOTIDE SEQUENCE [LARGE SCALE GENOMIC DNA]</scope>
    <source>
        <strain>JLS</strain>
    </source>
</reference>
<evidence type="ECO:0000255" key="1">
    <source>
        <dbReference type="HAMAP-Rule" id="MF_00693"/>
    </source>
</evidence>
<gene>
    <name type="ordered locus">Mjls_2290</name>
</gene>
<feature type="chain" id="PRO_1000045339" description="Probable transcriptional regulatory protein Mjls_2290">
    <location>
        <begin position="1"/>
        <end position="250"/>
    </location>
</feature>
<organism>
    <name type="scientific">Mycobacterium sp. (strain JLS)</name>
    <dbReference type="NCBI Taxonomy" id="164757"/>
    <lineage>
        <taxon>Bacteria</taxon>
        <taxon>Bacillati</taxon>
        <taxon>Actinomycetota</taxon>
        <taxon>Actinomycetes</taxon>
        <taxon>Mycobacteriales</taxon>
        <taxon>Mycobacteriaceae</taxon>
        <taxon>Mycobacterium</taxon>
    </lineage>
</organism>
<comment type="subcellular location">
    <subcellularLocation>
        <location evidence="1">Cytoplasm</location>
    </subcellularLocation>
</comment>
<comment type="similarity">
    <text evidence="1">Belongs to the TACO1 family.</text>
</comment>